<sequence length="210" mass="23288">IGHVAHGKSTLCKVLTGVDPIKFAAEKVNNITIKLGFANAKIFECKDCAAPKNYFSQKSSSPDQPPCPTCKGTHTQLLRHISIIDCPGHHDYMTTMLSGVAAMDGTLLLISAEQRCPQEQTREHFQAIQATGQKKIIIAQNKIDLVTEQQAQNNYQEIQAFVHGISDINVVPISAIQNLNIDYILKHLVETITPPRRNLKAHPRFTIIRS</sequence>
<proteinExistence type="inferred from homology"/>
<protein>
    <recommendedName>
        <fullName>Eukaryotic translation initiation factor 2 subunit gamma</fullName>
        <shortName>eIF2-gamma</shortName>
        <ecNumber>3.6.5.3</ecNumber>
    </recommendedName>
</protein>
<keyword id="KW-0963">Cytoplasm</keyword>
<keyword id="KW-0342">GTP-binding</keyword>
<keyword id="KW-0378">Hydrolase</keyword>
<keyword id="KW-0396">Initiation factor</keyword>
<keyword id="KW-0547">Nucleotide-binding</keyword>
<keyword id="KW-0648">Protein biosynthesis</keyword>
<organism>
    <name type="scientific">Spironucleus vortens</name>
    <dbReference type="NCBI Taxonomy" id="58336"/>
    <lineage>
        <taxon>Eukaryota</taxon>
        <taxon>Metamonada</taxon>
        <taxon>Diplomonadida</taxon>
        <taxon>Hexamitidae</taxon>
        <taxon>Hexamitinae</taxon>
        <taxon>Spironucleus</taxon>
    </lineage>
</organism>
<reference key="1">
    <citation type="journal article" date="1997" name="Mol. Biol. Evol.">
        <title>Widespread and ancient distribution of a noncanonical genetic code in diplomonads.</title>
        <authorList>
            <person name="Keeling P.J."/>
            <person name="Doolittle W.F."/>
        </authorList>
    </citation>
    <scope>NUCLEOTIDE SEQUENCE [GENOMIC DNA]</scope>
    <source>
        <strain>ATCC 50386</strain>
    </source>
</reference>
<evidence type="ECO:0000250" key="1">
    <source>
        <dbReference type="UniProtKB" id="P32481"/>
    </source>
</evidence>
<evidence type="ECO:0000250" key="2">
    <source>
        <dbReference type="UniProtKB" id="Q09130"/>
    </source>
</evidence>
<evidence type="ECO:0000255" key="3">
    <source>
        <dbReference type="PROSITE-ProRule" id="PRU01059"/>
    </source>
</evidence>
<accession>O36041</accession>
<feature type="chain" id="PRO_0000137446" description="Eukaryotic translation initiation factor 2 subunit gamma">
    <location>
        <begin position="1" status="less than"/>
        <end position="210" status="greater than"/>
    </location>
</feature>
<feature type="domain" description="tr-type G" evidence="3">
    <location>
        <begin position="1" status="less than"/>
        <end position="196"/>
    </location>
</feature>
<feature type="region of interest" description="G1" evidence="3">
    <location>
        <begin position="2"/>
        <end position="9"/>
    </location>
</feature>
<feature type="region of interest" description="G2" evidence="3">
    <location>
        <begin position="30"/>
        <end position="34"/>
    </location>
</feature>
<feature type="region of interest" description="G3" evidence="3">
    <location>
        <begin position="85"/>
        <end position="88"/>
    </location>
</feature>
<feature type="region of interest" description="G4" evidence="3">
    <location>
        <begin position="141"/>
        <end position="144"/>
    </location>
</feature>
<feature type="region of interest" description="G5" evidence="3">
    <location>
        <begin position="174"/>
        <end position="176"/>
    </location>
</feature>
<feature type="binding site" evidence="1">
    <location>
        <begin position="5"/>
        <end position="10"/>
    </location>
    <ligand>
        <name>GTP</name>
        <dbReference type="ChEBI" id="CHEBI:37565"/>
    </ligand>
</feature>
<feature type="binding site" evidence="1">
    <location>
        <begin position="141"/>
        <end position="144"/>
    </location>
    <ligand>
        <name>GTP</name>
        <dbReference type="ChEBI" id="CHEBI:37565"/>
    </ligand>
</feature>
<feature type="binding site" evidence="1">
    <location>
        <begin position="174"/>
        <end position="176"/>
    </location>
    <ligand>
        <name>GTP</name>
        <dbReference type="ChEBI" id="CHEBI:37565"/>
    </ligand>
</feature>
<feature type="non-terminal residue">
    <location>
        <position position="1"/>
    </location>
</feature>
<feature type="non-terminal residue">
    <location>
        <position position="210"/>
    </location>
</feature>
<name>IF2G_SPIVO</name>
<comment type="function">
    <text evidence="1">As a subunit of eukaryotic initiation factor 2 eIF2, involved in the early steps of protein synthesis. In the presence of GTP, eIF-2 forms a ternary complex with initiator tRNA Met-tRNAi and then recruits the 40S ribosomal complex and initiation factors eIF-1, eIF-1A and eIF-3 to form the 43S pre-initiation complex (43S PIC), a step that determines the rate of protein translation. The 43S PIC binds to mRNA and scans downstream to the initiation codon, where it forms a 48S initiation complex by codon-anticodon base pairing. This leads to the displacement of eIF-1 to allow GTPase-activating protein (GAP) eIF-5-mediated hydrolysis of eIF2-bound GTP. Hydrolysis of GTP and release of Pi, which makes GTP hydrolysis irreversible, causes the release of the eIF-2-GDP binary complex from the 40S subunit, an event that is essential for the subsequent joining of the 60S ribosomal subunit to form an elongation-competent 80S ribosome. In order for eIF-2 to recycle and catalyze another round of initiation, the GDP bound to eIF-2 must be exchanged with GTP by way of a reaction catalyzed by GDP-GTP exchange factor (GEF) eIF-2B.</text>
</comment>
<comment type="catalytic activity">
    <reaction evidence="1">
        <text>GTP + H2O = GDP + phosphate + H(+)</text>
        <dbReference type="Rhea" id="RHEA:19669"/>
        <dbReference type="ChEBI" id="CHEBI:15377"/>
        <dbReference type="ChEBI" id="CHEBI:15378"/>
        <dbReference type="ChEBI" id="CHEBI:37565"/>
        <dbReference type="ChEBI" id="CHEBI:43474"/>
        <dbReference type="ChEBI" id="CHEBI:58189"/>
        <dbReference type="EC" id="3.6.5.3"/>
    </reaction>
</comment>
<comment type="subunit">
    <text evidence="1">Eukaryotic translation initiation factor 2 eIF2 is a heterotrimeric complex composed of an alpha, a beta and a gamma subunit. The factors eIF-1, eIF-2, eIF-3, TIF5/eIF-5 and methionyl-tRNAi form a multifactor complex (MFC) that may bind to the 40S ribosome.</text>
</comment>
<comment type="subcellular location">
    <subcellularLocation>
        <location evidence="2">Cytoplasm</location>
        <location evidence="2">Cytosol</location>
    </subcellularLocation>
</comment>
<comment type="similarity">
    <text evidence="3">Belongs to the TRAFAC class translation factor GTPase superfamily. Classic translation factor GTPase family. EIF2G subfamily.</text>
</comment>
<dbReference type="EC" id="3.6.5.3"/>
<dbReference type="EMBL" id="U94408">
    <property type="protein sequence ID" value="AAB81022.1"/>
    <property type="molecule type" value="Genomic_DNA"/>
</dbReference>
<dbReference type="SMR" id="O36041"/>
<dbReference type="GO" id="GO:0005829">
    <property type="term" value="C:cytosol"/>
    <property type="evidence" value="ECO:0007669"/>
    <property type="project" value="UniProtKB-SubCell"/>
</dbReference>
<dbReference type="GO" id="GO:0005850">
    <property type="term" value="C:eukaryotic translation initiation factor 2 complex"/>
    <property type="evidence" value="ECO:0000250"/>
    <property type="project" value="UniProtKB"/>
</dbReference>
<dbReference type="GO" id="GO:0005525">
    <property type="term" value="F:GTP binding"/>
    <property type="evidence" value="ECO:0007669"/>
    <property type="project" value="UniProtKB-KW"/>
</dbReference>
<dbReference type="GO" id="GO:0003924">
    <property type="term" value="F:GTPase activity"/>
    <property type="evidence" value="ECO:0007669"/>
    <property type="project" value="InterPro"/>
</dbReference>
<dbReference type="GO" id="GO:1990856">
    <property type="term" value="F:methionyl-initiator methionine tRNA binding"/>
    <property type="evidence" value="ECO:0000250"/>
    <property type="project" value="UniProtKB"/>
</dbReference>
<dbReference type="GO" id="GO:0003743">
    <property type="term" value="F:translation initiation factor activity"/>
    <property type="evidence" value="ECO:0007669"/>
    <property type="project" value="UniProtKB-KW"/>
</dbReference>
<dbReference type="GO" id="GO:0002183">
    <property type="term" value="P:cytoplasmic translational initiation"/>
    <property type="evidence" value="ECO:0000250"/>
    <property type="project" value="UniProtKB"/>
</dbReference>
<dbReference type="GO" id="GO:0001731">
    <property type="term" value="P:formation of translation preinitiation complex"/>
    <property type="evidence" value="ECO:0007669"/>
    <property type="project" value="TreeGrafter"/>
</dbReference>
<dbReference type="Gene3D" id="3.40.50.300">
    <property type="entry name" value="P-loop containing nucleotide triphosphate hydrolases"/>
    <property type="match status" value="1"/>
</dbReference>
<dbReference type="InterPro" id="IPR050543">
    <property type="entry name" value="eIF2G"/>
</dbReference>
<dbReference type="InterPro" id="IPR027417">
    <property type="entry name" value="P-loop_NTPase"/>
</dbReference>
<dbReference type="InterPro" id="IPR000795">
    <property type="entry name" value="T_Tr_GTP-bd_dom"/>
</dbReference>
<dbReference type="PANTHER" id="PTHR42854">
    <property type="entry name" value="EUKARYOTIC TRANSLATION INITIATION FACTOR 2 SUBUNIT 3 FAMILY MEMBER"/>
    <property type="match status" value="1"/>
</dbReference>
<dbReference type="PANTHER" id="PTHR42854:SF3">
    <property type="entry name" value="EUKARYOTIC TRANSLATION INITIATION FACTOR 2 SUBUNIT 3-RELATED"/>
    <property type="match status" value="1"/>
</dbReference>
<dbReference type="Pfam" id="PF00009">
    <property type="entry name" value="GTP_EFTU"/>
    <property type="match status" value="1"/>
</dbReference>
<dbReference type="PRINTS" id="PR00315">
    <property type="entry name" value="ELONGATNFCT"/>
</dbReference>
<dbReference type="SUPFAM" id="SSF52540">
    <property type="entry name" value="P-loop containing nucleoside triphosphate hydrolases"/>
    <property type="match status" value="1"/>
</dbReference>
<dbReference type="PROSITE" id="PS51722">
    <property type="entry name" value="G_TR_2"/>
    <property type="match status" value="1"/>
</dbReference>